<name>LPXA_BURCM</name>
<keyword id="KW-0012">Acyltransferase</keyword>
<keyword id="KW-0963">Cytoplasm</keyword>
<keyword id="KW-0441">Lipid A biosynthesis</keyword>
<keyword id="KW-0444">Lipid biosynthesis</keyword>
<keyword id="KW-0443">Lipid metabolism</keyword>
<keyword id="KW-0677">Repeat</keyword>
<keyword id="KW-0808">Transferase</keyword>
<reference key="1">
    <citation type="submission" date="2006-08" db="EMBL/GenBank/DDBJ databases">
        <title>Complete sequence of chromosome 1 of Burkholderia cepacia AMMD.</title>
        <authorList>
            <person name="Copeland A."/>
            <person name="Lucas S."/>
            <person name="Lapidus A."/>
            <person name="Barry K."/>
            <person name="Detter J.C."/>
            <person name="Glavina del Rio T."/>
            <person name="Hammon N."/>
            <person name="Israni S."/>
            <person name="Pitluck S."/>
            <person name="Bruce D."/>
            <person name="Chain P."/>
            <person name="Malfatti S."/>
            <person name="Shin M."/>
            <person name="Vergez L."/>
            <person name="Schmutz J."/>
            <person name="Larimer F."/>
            <person name="Land M."/>
            <person name="Hauser L."/>
            <person name="Kyrpides N."/>
            <person name="Kim E."/>
            <person name="Parke J."/>
            <person name="Coenye T."/>
            <person name="Konstantinidis K."/>
            <person name="Ramette A."/>
            <person name="Tiedje J."/>
            <person name="Richardson P."/>
        </authorList>
    </citation>
    <scope>NUCLEOTIDE SEQUENCE [LARGE SCALE GENOMIC DNA]</scope>
    <source>
        <strain>ATCC BAA-244 / DSM 16087 / CCUG 44356 / LMG 19182 / AMMD</strain>
    </source>
</reference>
<organism>
    <name type="scientific">Burkholderia ambifaria (strain ATCC BAA-244 / DSM 16087 / CCUG 44356 / LMG 19182 / AMMD)</name>
    <name type="common">Burkholderia cepacia (strain AMMD)</name>
    <dbReference type="NCBI Taxonomy" id="339670"/>
    <lineage>
        <taxon>Bacteria</taxon>
        <taxon>Pseudomonadati</taxon>
        <taxon>Pseudomonadota</taxon>
        <taxon>Betaproteobacteria</taxon>
        <taxon>Burkholderiales</taxon>
        <taxon>Burkholderiaceae</taxon>
        <taxon>Burkholderia</taxon>
        <taxon>Burkholderia cepacia complex</taxon>
    </lineage>
</organism>
<evidence type="ECO:0000255" key="1">
    <source>
        <dbReference type="HAMAP-Rule" id="MF_00387"/>
    </source>
</evidence>
<feature type="chain" id="PRO_1000013150" description="Acyl-[acyl-carrier-protein]--UDP-N-acetylglucosamine O-acyltransferase">
    <location>
        <begin position="1"/>
        <end position="262"/>
    </location>
</feature>
<accession>Q0BE27</accession>
<protein>
    <recommendedName>
        <fullName evidence="1">Acyl-[acyl-carrier-protein]--UDP-N-acetylglucosamine O-acyltransferase</fullName>
        <shortName evidence="1">UDP-N-acetylglucosamine acyltransferase</shortName>
        <ecNumber evidence="1">2.3.1.129</ecNumber>
    </recommendedName>
</protein>
<sequence length="262" mass="27849">MTRIHPTAIVEPGAQIDESVEIGPYAIVGPHVTIGARTTIGSHSVIEGHTTLGEDNRIGHYASVGGRPQDMKYKAEPTKLVIGNRNTIREFTTIHTGTVQDVGVTTLGDDNWIMAYVHIGHDCRVGNNVILSSNAQMAGHVEIGDYAIIGGMSGVHQFVRIGAHSMLGGASALVQDVPPFVIAAGNKAEPHGINVEGLRRRGFSPDAISALRSAYRLLYKNGLSLEEAKVQLRELAVAGGEGDAAVTAFVEFIDASQRGIIR</sequence>
<gene>
    <name evidence="1" type="primary">lpxA</name>
    <name type="ordered locus">Bamb_2040</name>
</gene>
<proteinExistence type="inferred from homology"/>
<comment type="function">
    <text evidence="1">Involved in the biosynthesis of lipid A, a phosphorylated glycolipid that anchors the lipopolysaccharide to the outer membrane of the cell.</text>
</comment>
<comment type="catalytic activity">
    <reaction evidence="1">
        <text>a (3R)-hydroxyacyl-[ACP] + UDP-N-acetyl-alpha-D-glucosamine = a UDP-3-O-[(3R)-3-hydroxyacyl]-N-acetyl-alpha-D-glucosamine + holo-[ACP]</text>
        <dbReference type="Rhea" id="RHEA:67812"/>
        <dbReference type="Rhea" id="RHEA-COMP:9685"/>
        <dbReference type="Rhea" id="RHEA-COMP:9945"/>
        <dbReference type="ChEBI" id="CHEBI:57705"/>
        <dbReference type="ChEBI" id="CHEBI:64479"/>
        <dbReference type="ChEBI" id="CHEBI:78827"/>
        <dbReference type="ChEBI" id="CHEBI:173225"/>
        <dbReference type="EC" id="2.3.1.129"/>
    </reaction>
</comment>
<comment type="pathway">
    <text evidence="1">Glycolipid biosynthesis; lipid IV(A) biosynthesis; lipid IV(A) from (3R)-3-hydroxytetradecanoyl-[acyl-carrier-protein] and UDP-N-acetyl-alpha-D-glucosamine: step 1/6.</text>
</comment>
<comment type="subunit">
    <text evidence="1">Homotrimer.</text>
</comment>
<comment type="subcellular location">
    <subcellularLocation>
        <location evidence="1">Cytoplasm</location>
    </subcellularLocation>
</comment>
<comment type="similarity">
    <text evidence="1">Belongs to the transferase hexapeptide repeat family. LpxA subfamily.</text>
</comment>
<dbReference type="EC" id="2.3.1.129" evidence="1"/>
<dbReference type="EMBL" id="CP000440">
    <property type="protein sequence ID" value="ABI87596.1"/>
    <property type="molecule type" value="Genomic_DNA"/>
</dbReference>
<dbReference type="RefSeq" id="WP_011657278.1">
    <property type="nucleotide sequence ID" value="NC_008390.1"/>
</dbReference>
<dbReference type="SMR" id="Q0BE27"/>
<dbReference type="GeneID" id="93085761"/>
<dbReference type="KEGG" id="bam:Bamb_2040"/>
<dbReference type="PATRIC" id="fig|339670.21.peg.2904"/>
<dbReference type="eggNOG" id="COG1043">
    <property type="taxonomic scope" value="Bacteria"/>
</dbReference>
<dbReference type="UniPathway" id="UPA00359">
    <property type="reaction ID" value="UER00477"/>
</dbReference>
<dbReference type="Proteomes" id="UP000000662">
    <property type="component" value="Chromosome 1"/>
</dbReference>
<dbReference type="GO" id="GO:0005737">
    <property type="term" value="C:cytoplasm"/>
    <property type="evidence" value="ECO:0007669"/>
    <property type="project" value="UniProtKB-SubCell"/>
</dbReference>
<dbReference type="GO" id="GO:0016020">
    <property type="term" value="C:membrane"/>
    <property type="evidence" value="ECO:0007669"/>
    <property type="project" value="GOC"/>
</dbReference>
<dbReference type="GO" id="GO:0008780">
    <property type="term" value="F:acyl-[acyl-carrier-protein]-UDP-N-acetylglucosamine O-acyltransferase activity"/>
    <property type="evidence" value="ECO:0007669"/>
    <property type="project" value="UniProtKB-UniRule"/>
</dbReference>
<dbReference type="GO" id="GO:0009245">
    <property type="term" value="P:lipid A biosynthetic process"/>
    <property type="evidence" value="ECO:0007669"/>
    <property type="project" value="UniProtKB-UniRule"/>
</dbReference>
<dbReference type="CDD" id="cd03351">
    <property type="entry name" value="LbH_UDP-GlcNAc_AT"/>
    <property type="match status" value="1"/>
</dbReference>
<dbReference type="Gene3D" id="2.160.10.10">
    <property type="entry name" value="Hexapeptide repeat proteins"/>
    <property type="match status" value="1"/>
</dbReference>
<dbReference type="Gene3D" id="1.20.1180.10">
    <property type="entry name" value="Udp N-acetylglucosamine O-acyltransferase, C-terminal domain"/>
    <property type="match status" value="1"/>
</dbReference>
<dbReference type="HAMAP" id="MF_00387">
    <property type="entry name" value="LpxA"/>
    <property type="match status" value="1"/>
</dbReference>
<dbReference type="InterPro" id="IPR029098">
    <property type="entry name" value="Acetyltransf_C"/>
</dbReference>
<dbReference type="InterPro" id="IPR037157">
    <property type="entry name" value="Acetyltransf_C_sf"/>
</dbReference>
<dbReference type="InterPro" id="IPR001451">
    <property type="entry name" value="Hexapep"/>
</dbReference>
<dbReference type="InterPro" id="IPR010137">
    <property type="entry name" value="Lipid_A_LpxA"/>
</dbReference>
<dbReference type="InterPro" id="IPR011004">
    <property type="entry name" value="Trimer_LpxA-like_sf"/>
</dbReference>
<dbReference type="NCBIfam" id="TIGR01852">
    <property type="entry name" value="lipid_A_lpxA"/>
    <property type="match status" value="1"/>
</dbReference>
<dbReference type="NCBIfam" id="NF003657">
    <property type="entry name" value="PRK05289.1"/>
    <property type="match status" value="1"/>
</dbReference>
<dbReference type="PANTHER" id="PTHR43480">
    <property type="entry name" value="ACYL-[ACYL-CARRIER-PROTEIN]--UDP-N-ACETYLGLUCOSAMINE O-ACYLTRANSFERASE"/>
    <property type="match status" value="1"/>
</dbReference>
<dbReference type="PANTHER" id="PTHR43480:SF1">
    <property type="entry name" value="ACYL-[ACYL-CARRIER-PROTEIN]--UDP-N-ACETYLGLUCOSAMINE O-ACYLTRANSFERASE, MITOCHONDRIAL-RELATED"/>
    <property type="match status" value="1"/>
</dbReference>
<dbReference type="Pfam" id="PF13720">
    <property type="entry name" value="Acetyltransf_11"/>
    <property type="match status" value="1"/>
</dbReference>
<dbReference type="Pfam" id="PF00132">
    <property type="entry name" value="Hexapep"/>
    <property type="match status" value="2"/>
</dbReference>
<dbReference type="PIRSF" id="PIRSF000456">
    <property type="entry name" value="UDP-GlcNAc_acltr"/>
    <property type="match status" value="1"/>
</dbReference>
<dbReference type="SUPFAM" id="SSF51161">
    <property type="entry name" value="Trimeric LpxA-like enzymes"/>
    <property type="match status" value="1"/>
</dbReference>
<dbReference type="PROSITE" id="PS00101">
    <property type="entry name" value="HEXAPEP_TRANSFERASES"/>
    <property type="match status" value="1"/>
</dbReference>